<protein>
    <recommendedName>
        <fullName evidence="2">DNA polymerase II large subunit</fullName>
        <shortName evidence="2">Pol II</shortName>
        <ecNumber evidence="2">2.7.7.7</ecNumber>
    </recommendedName>
    <alternativeName>
        <fullName evidence="2">Exodeoxyribonuclease large subunit</fullName>
        <ecNumber evidence="2">3.1.11.1</ecNumber>
    </alternativeName>
</protein>
<comment type="function">
    <text evidence="1">Possesses two activities: a DNA synthesis (polymerase) and an exonucleolytic activity that degrades single-stranded DNA in the 3'- to 5'-direction. Has a template-primer preference which is characteristic of a replicative DNA polymerase (By similarity).</text>
</comment>
<comment type="catalytic activity">
    <reaction evidence="2">
        <text>DNA(n) + a 2'-deoxyribonucleoside 5'-triphosphate = DNA(n+1) + diphosphate</text>
        <dbReference type="Rhea" id="RHEA:22508"/>
        <dbReference type="Rhea" id="RHEA-COMP:17339"/>
        <dbReference type="Rhea" id="RHEA-COMP:17340"/>
        <dbReference type="ChEBI" id="CHEBI:33019"/>
        <dbReference type="ChEBI" id="CHEBI:61560"/>
        <dbReference type="ChEBI" id="CHEBI:173112"/>
        <dbReference type="EC" id="2.7.7.7"/>
    </reaction>
</comment>
<comment type="catalytic activity">
    <reaction evidence="2">
        <text>Exonucleolytic cleavage in the 3'- to 5'-direction to yield nucleoside 5'-phosphates.</text>
        <dbReference type="EC" id="3.1.11.1"/>
    </reaction>
</comment>
<comment type="subunit">
    <text evidence="2">Heterodimer of a large subunit and a small subunit.</text>
</comment>
<comment type="similarity">
    <text evidence="2">Belongs to the archaeal DNA polymerase II family.</text>
</comment>
<sequence length="1134" mass="126003">MPPKTSEAQEAYFKKLEAEFLHCREIATAARRKGYDPSLEVEIPSATDLADRVEVIMGVPGLAAHIRKCEEKMSREEASLQVAADIAEGLVGKFKDEEEAVQCAVRTAVAVLTEGVVAAPLEGISAVKLAKNDDGTEYIKVYFAGPIRSAGGTAEALAVLAADYVRRKTGRAPYKIRDVEVERFVEEIMLYKSIAHLQYTPTDEEIRLIVRNCPVCIDGEPTEQEEVQGYRNLERVETNRVRGGIALVIAEGIILKAPKVKKHVDKLKFDGWEWLDKIIAGSKPAGGENKEEEKKIKPKDKFLADLIAGRPVFGHPSRAGGFRLRYGRSRNTGFATAGIHPASMTIMDDFIATGTQLKVERPGKAAAMVPVDSLEGPTVRLFNGDVVRISDEKTALKVRPDVSQILDNGEIIINYGDFLENNHTFVPSPYVEEWWIQDLEEKTKDKVEVNSPEEAFAVSEKYGVPLHPKYTYMWMDLTTDDVVYLARYISASGMVENGELRLPVEQRSKSLLEILLIPQKVRDNTVILSAEDTYILCRCLGLNPDLSMKNPDAYAGLDSHAWKAVSALCGVTVMDRAPARIGARMGRPEKSKLREMKPPVHVLFPVGEAGGMRRSLQDASAYSKSMTDRIGEIEVEVGRRKCPDCGKMTYMVACECGGHTIPVYGCPDCGISGIEGDCPKCHKPTTPNVKQKIDVKGLYAAALKRVGERDNFEVLKGVQGLISKEKTPEPLEKGILRAKHEVFVFKDGTIRYDMSDVPLTHFIPREIGLSVEKARELGYEKDTYGAPLESPEQVCELRVQDIILSHDASNYLLKVCAFLDDELEKYYGLPRYYNVHEEQDLIGHLVIGLAPHTSAGVLGRIIGFVSSSAGYAHPFFHAAKRRNCDGDEDCVMMLMDGLLNFSLSYLPDRRGGKMDAPLVLSMRIDPKEIDKESHNIDVMARYPKEFYLATREFKAPKDVEKIMDLVSKRLGTPEQYEGFKFTHGTSDIAAGPANSAYKTLGSMEDKLKAQLELGRRLRAVDEKDVAERVINSHFLPDLIGNLRAFSTQQMRCVKCGERYRRPPLTGTCPRCGGGRVILTVHEGAVTKYMDVSLAIAKEYGVPSYTIQRLELLSLSIKSLFENDKSKQTGLADFM</sequence>
<name>DP2L_METAR</name>
<reference key="1">
    <citation type="journal article" date="2006" name="Science">
        <title>Genome of rice cluster I archaea -- the key methane producers in the rice rhizosphere.</title>
        <authorList>
            <person name="Erkel C."/>
            <person name="Kube M."/>
            <person name="Reinhardt R."/>
            <person name="Liesack W."/>
        </authorList>
    </citation>
    <scope>NUCLEOTIDE SEQUENCE [LARGE SCALE GENOMIC DNA]</scope>
    <source>
        <strain>DSM 22066 / NBRC 105507 / MRE50</strain>
    </source>
</reference>
<proteinExistence type="inferred from homology"/>
<dbReference type="EC" id="2.7.7.7" evidence="2"/>
<dbReference type="EC" id="3.1.11.1" evidence="2"/>
<dbReference type="EMBL" id="AM114193">
    <property type="protein sequence ID" value="CAJ36247.1"/>
    <property type="molecule type" value="Genomic_DNA"/>
</dbReference>
<dbReference type="RefSeq" id="WP_012036271.1">
    <property type="nucleotide sequence ID" value="NC_009464.1"/>
</dbReference>
<dbReference type="SMR" id="Q0W5U6"/>
<dbReference type="STRING" id="351160.RCIX896"/>
<dbReference type="GeneID" id="5142819"/>
<dbReference type="KEGG" id="rci:RCIX896"/>
<dbReference type="PATRIC" id="fig|351160.9.peg.1995"/>
<dbReference type="eggNOG" id="arCOG04447">
    <property type="taxonomic scope" value="Archaea"/>
</dbReference>
<dbReference type="OrthoDB" id="7529at2157"/>
<dbReference type="Proteomes" id="UP000000663">
    <property type="component" value="Chromosome"/>
</dbReference>
<dbReference type="GO" id="GO:0003677">
    <property type="term" value="F:DNA binding"/>
    <property type="evidence" value="ECO:0007669"/>
    <property type="project" value="UniProtKB-UniRule"/>
</dbReference>
<dbReference type="GO" id="GO:0003887">
    <property type="term" value="F:DNA-directed DNA polymerase activity"/>
    <property type="evidence" value="ECO:0007669"/>
    <property type="project" value="UniProtKB-UniRule"/>
</dbReference>
<dbReference type="GO" id="GO:0008310">
    <property type="term" value="F:single-stranded DNA 3'-5' DNA exonuclease activity"/>
    <property type="evidence" value="ECO:0007669"/>
    <property type="project" value="UniProtKB-EC"/>
</dbReference>
<dbReference type="GO" id="GO:0006308">
    <property type="term" value="P:DNA catabolic process"/>
    <property type="evidence" value="ECO:0007669"/>
    <property type="project" value="UniProtKB-UniRule"/>
</dbReference>
<dbReference type="GO" id="GO:0006261">
    <property type="term" value="P:DNA-templated DNA replication"/>
    <property type="evidence" value="ECO:0007669"/>
    <property type="project" value="UniProtKB-UniRule"/>
</dbReference>
<dbReference type="HAMAP" id="MF_00324">
    <property type="entry name" value="DNApol_II_L_arch"/>
    <property type="match status" value="1"/>
</dbReference>
<dbReference type="InterPro" id="IPR004475">
    <property type="entry name" value="PolC_DP2"/>
</dbReference>
<dbReference type="InterPro" id="IPR056172">
    <property type="entry name" value="PolC_DP2_cat_dom"/>
</dbReference>
<dbReference type="InterPro" id="IPR056171">
    <property type="entry name" value="PolC_DP2_central_dom"/>
</dbReference>
<dbReference type="InterPro" id="IPR016033">
    <property type="entry name" value="PolC_DP2_N"/>
</dbReference>
<dbReference type="NCBIfam" id="TIGR00354">
    <property type="entry name" value="polC"/>
    <property type="match status" value="1"/>
</dbReference>
<dbReference type="NCBIfam" id="NF003103">
    <property type="entry name" value="PRK04023.1"/>
    <property type="match status" value="1"/>
</dbReference>
<dbReference type="PANTHER" id="PTHR42210">
    <property type="entry name" value="DNA POLYMERASE II LARGE SUBUNIT"/>
    <property type="match status" value="1"/>
</dbReference>
<dbReference type="PANTHER" id="PTHR42210:SF1">
    <property type="entry name" value="DNA POLYMERASE II LARGE SUBUNIT"/>
    <property type="match status" value="1"/>
</dbReference>
<dbReference type="Pfam" id="PF24846">
    <property type="entry name" value="PolC_DP2_cat"/>
    <property type="match status" value="1"/>
</dbReference>
<dbReference type="Pfam" id="PF24844">
    <property type="entry name" value="PolC_DP2_central"/>
    <property type="match status" value="1"/>
</dbReference>
<dbReference type="Pfam" id="PF03833">
    <property type="entry name" value="PolC_DP2_N"/>
    <property type="match status" value="1"/>
</dbReference>
<dbReference type="PIRSF" id="PIRSF016275">
    <property type="entry name" value="PolC_DP2"/>
    <property type="match status" value="1"/>
</dbReference>
<keyword id="KW-0235">DNA replication</keyword>
<keyword id="KW-0238">DNA-binding</keyword>
<keyword id="KW-0239">DNA-directed DNA polymerase</keyword>
<keyword id="KW-0269">Exonuclease</keyword>
<keyword id="KW-0378">Hydrolase</keyword>
<keyword id="KW-0511">Multifunctional enzyme</keyword>
<keyword id="KW-0540">Nuclease</keyword>
<keyword id="KW-0548">Nucleotidyltransferase</keyword>
<keyword id="KW-1185">Reference proteome</keyword>
<keyword id="KW-0808">Transferase</keyword>
<gene>
    <name evidence="2" type="primary">polC</name>
    <name type="synonym">pol2b</name>
    <name type="ordered locus">UNCMA_19460</name>
    <name type="ORF">RCIX896</name>
</gene>
<evidence type="ECO:0000250" key="1"/>
<evidence type="ECO:0000255" key="2">
    <source>
        <dbReference type="HAMAP-Rule" id="MF_00324"/>
    </source>
</evidence>
<feature type="chain" id="PRO_0000294700" description="DNA polymerase II large subunit">
    <location>
        <begin position="1"/>
        <end position="1134"/>
    </location>
</feature>
<organism>
    <name type="scientific">Methanocella arvoryzae (strain DSM 22066 / NBRC 105507 / MRE50)</name>
    <dbReference type="NCBI Taxonomy" id="351160"/>
    <lineage>
        <taxon>Archaea</taxon>
        <taxon>Methanobacteriati</taxon>
        <taxon>Methanobacteriota</taxon>
        <taxon>Stenosarchaea group</taxon>
        <taxon>Methanomicrobia</taxon>
        <taxon>Methanocellales</taxon>
        <taxon>Methanocellaceae</taxon>
        <taxon>Methanocella</taxon>
    </lineage>
</organism>
<accession>Q0W5U6</accession>